<reference key="1">
    <citation type="submission" date="2008-02" db="EMBL/GenBank/DDBJ databases">
        <title>Complete sequence of Escherichia coli C str. ATCC 8739.</title>
        <authorList>
            <person name="Copeland A."/>
            <person name="Lucas S."/>
            <person name="Lapidus A."/>
            <person name="Glavina del Rio T."/>
            <person name="Dalin E."/>
            <person name="Tice H."/>
            <person name="Bruce D."/>
            <person name="Goodwin L."/>
            <person name="Pitluck S."/>
            <person name="Kiss H."/>
            <person name="Brettin T."/>
            <person name="Detter J.C."/>
            <person name="Han C."/>
            <person name="Kuske C.R."/>
            <person name="Schmutz J."/>
            <person name="Larimer F."/>
            <person name="Land M."/>
            <person name="Hauser L."/>
            <person name="Kyrpides N."/>
            <person name="Mikhailova N."/>
            <person name="Ingram L."/>
            <person name="Richardson P."/>
        </authorList>
    </citation>
    <scope>NUCLEOTIDE SEQUENCE [LARGE SCALE GENOMIC DNA]</scope>
    <source>
        <strain>ATCC 8739 / DSM 1576 / NBRC 3972 / NCIMB 8545 / WDCM 00012 / Crooks</strain>
    </source>
</reference>
<proteinExistence type="inferred from homology"/>
<accession>B1IVF1</accession>
<gene>
    <name evidence="1" type="primary">zapB</name>
    <name type="ordered locus">EcolC_4090</name>
</gene>
<keyword id="KW-0007">Acetylation</keyword>
<keyword id="KW-0131">Cell cycle</keyword>
<keyword id="KW-0132">Cell division</keyword>
<keyword id="KW-0175">Coiled coil</keyword>
<keyword id="KW-0963">Cytoplasm</keyword>
<keyword id="KW-0717">Septation</keyword>
<name>ZAPB_ECOLC</name>
<evidence type="ECO:0000255" key="1">
    <source>
        <dbReference type="HAMAP-Rule" id="MF_01196"/>
    </source>
</evidence>
<evidence type="ECO:0000256" key="2">
    <source>
        <dbReference type="SAM" id="MobiDB-lite"/>
    </source>
</evidence>
<sequence length="79" mass="9403">MSLEVFEKLEAKVQQAIDTITLLQMEIEELKEKNNSLSQEVQNAQHQREELERENNHLKEQQNGWQERLQALLGRMEEV</sequence>
<dbReference type="EMBL" id="CP000946">
    <property type="protein sequence ID" value="ACA79688.1"/>
    <property type="molecule type" value="Genomic_DNA"/>
</dbReference>
<dbReference type="SMR" id="B1IVF1"/>
<dbReference type="KEGG" id="ecl:EcolC_4090"/>
<dbReference type="HOGENOM" id="CLU_171174_2_0_6"/>
<dbReference type="GO" id="GO:0005737">
    <property type="term" value="C:cytoplasm"/>
    <property type="evidence" value="ECO:0007669"/>
    <property type="project" value="UniProtKB-SubCell"/>
</dbReference>
<dbReference type="GO" id="GO:0000917">
    <property type="term" value="P:division septum assembly"/>
    <property type="evidence" value="ECO:0007669"/>
    <property type="project" value="UniProtKB-KW"/>
</dbReference>
<dbReference type="GO" id="GO:0043093">
    <property type="term" value="P:FtsZ-dependent cytokinesis"/>
    <property type="evidence" value="ECO:0007669"/>
    <property type="project" value="UniProtKB-UniRule"/>
</dbReference>
<dbReference type="FunFam" id="1.20.5.340:FF:000014">
    <property type="entry name" value="Cell division protein ZapB"/>
    <property type="match status" value="1"/>
</dbReference>
<dbReference type="Gene3D" id="1.20.5.340">
    <property type="match status" value="1"/>
</dbReference>
<dbReference type="HAMAP" id="MF_01196">
    <property type="entry name" value="ZapB"/>
    <property type="match status" value="1"/>
</dbReference>
<dbReference type="InterPro" id="IPR009252">
    <property type="entry name" value="Cell_div_ZapB"/>
</dbReference>
<dbReference type="NCBIfam" id="NF011951">
    <property type="entry name" value="PRK15422.1"/>
    <property type="match status" value="1"/>
</dbReference>
<dbReference type="Pfam" id="PF06005">
    <property type="entry name" value="ZapB"/>
    <property type="match status" value="1"/>
</dbReference>
<organism>
    <name type="scientific">Escherichia coli (strain ATCC 8739 / DSM 1576 / NBRC 3972 / NCIMB 8545 / WDCM 00012 / Crooks)</name>
    <dbReference type="NCBI Taxonomy" id="481805"/>
    <lineage>
        <taxon>Bacteria</taxon>
        <taxon>Pseudomonadati</taxon>
        <taxon>Pseudomonadota</taxon>
        <taxon>Gammaproteobacteria</taxon>
        <taxon>Enterobacterales</taxon>
        <taxon>Enterobacteriaceae</taxon>
        <taxon>Escherichia</taxon>
    </lineage>
</organism>
<feature type="chain" id="PRO_1000138434" description="Cell division protein ZapB">
    <location>
        <begin position="1"/>
        <end position="79"/>
    </location>
</feature>
<feature type="region of interest" description="Disordered" evidence="2">
    <location>
        <begin position="34"/>
        <end position="65"/>
    </location>
</feature>
<feature type="coiled-coil region" evidence="1">
    <location>
        <begin position="3"/>
        <end position="79"/>
    </location>
</feature>
<feature type="compositionally biased region" description="Polar residues" evidence="2">
    <location>
        <begin position="35"/>
        <end position="45"/>
    </location>
</feature>
<feature type="compositionally biased region" description="Basic and acidic residues" evidence="2">
    <location>
        <begin position="46"/>
        <end position="60"/>
    </location>
</feature>
<feature type="modified residue" description="N6-acetyllysine" evidence="1">
    <location>
        <position position="8"/>
    </location>
</feature>
<comment type="function">
    <text evidence="1">Non-essential, abundant cell division factor that is required for proper Z-ring formation. It is recruited early to the divisome by direct interaction with FtsZ, stimulating Z-ring assembly and thereby promoting cell division earlier in the cell cycle. Its recruitment to the Z-ring requires functional FtsA or ZipA.</text>
</comment>
<comment type="subunit">
    <text evidence="1">Homodimer. The ends of the coiled-coil dimer bind to each other, forming polymers. Interacts with FtsZ.</text>
</comment>
<comment type="subcellular location">
    <subcellularLocation>
        <location evidence="1">Cytoplasm</location>
    </subcellularLocation>
    <text evidence="1">Localizes to the septum at mid-cell, in a FtsZ-like pattern.</text>
</comment>
<comment type="similarity">
    <text evidence="1">Belongs to the ZapB family.</text>
</comment>
<protein>
    <recommendedName>
        <fullName evidence="1">Cell division protein ZapB</fullName>
    </recommendedName>
</protein>